<sequence length="92" mass="10146">MAKGQSLQDPFLNALRRERVPVSVYLVNGIKLQGTIESFDQFVVLLRNTVSQMVYKHAISTVVPARNVRVGPGGGYVQSNEGNQAEDDDVEQ</sequence>
<proteinExistence type="inferred from homology"/>
<reference key="1">
    <citation type="journal article" date="2005" name="Jpn. Agric. Res. Q.">
        <title>Genome sequence of Xanthomonas oryzae pv. oryzae suggests contribution of large numbers of effector genes and insertion sequences to its race diversity.</title>
        <authorList>
            <person name="Ochiai H."/>
            <person name="Inoue Y."/>
            <person name="Takeya M."/>
            <person name="Sasaki A."/>
            <person name="Kaku H."/>
        </authorList>
    </citation>
    <scope>NUCLEOTIDE SEQUENCE [LARGE SCALE GENOMIC DNA]</scope>
    <source>
        <strain>MAFF 311018</strain>
    </source>
</reference>
<comment type="function">
    <text evidence="1">RNA chaperone that binds small regulatory RNA (sRNAs) and mRNAs to facilitate mRNA translational regulation in response to envelope stress, environmental stress and changes in metabolite concentrations. Also binds with high specificity to tRNAs.</text>
</comment>
<comment type="subunit">
    <text evidence="1">Homohexamer.</text>
</comment>
<comment type="similarity">
    <text evidence="1">Belongs to the Hfq family.</text>
</comment>
<evidence type="ECO:0000255" key="1">
    <source>
        <dbReference type="HAMAP-Rule" id="MF_00436"/>
    </source>
</evidence>
<evidence type="ECO:0000255" key="2">
    <source>
        <dbReference type="PROSITE-ProRule" id="PRU01346"/>
    </source>
</evidence>
<evidence type="ECO:0000256" key="3">
    <source>
        <dbReference type="SAM" id="MobiDB-lite"/>
    </source>
</evidence>
<feature type="chain" id="PRO_0000265204" description="RNA-binding protein Hfq">
    <location>
        <begin position="1"/>
        <end position="92"/>
    </location>
</feature>
<feature type="domain" description="Sm" evidence="2">
    <location>
        <begin position="9"/>
        <end position="68"/>
    </location>
</feature>
<feature type="region of interest" description="Disordered" evidence="3">
    <location>
        <begin position="73"/>
        <end position="92"/>
    </location>
</feature>
<keyword id="KW-0694">RNA-binding</keyword>
<keyword id="KW-0346">Stress response</keyword>
<protein>
    <recommendedName>
        <fullName evidence="1">RNA-binding protein Hfq</fullName>
    </recommendedName>
</protein>
<gene>
    <name evidence="1" type="primary">hfq</name>
    <name type="ordered locus">XOO2798</name>
</gene>
<dbReference type="EMBL" id="AP008229">
    <property type="protein sequence ID" value="BAE69553.1"/>
    <property type="molecule type" value="Genomic_DNA"/>
</dbReference>
<dbReference type="RefSeq" id="WP_005915027.1">
    <property type="nucleotide sequence ID" value="NC_007705.1"/>
</dbReference>
<dbReference type="SMR" id="Q2P1M4"/>
<dbReference type="GeneID" id="97510110"/>
<dbReference type="KEGG" id="xom:XOO2798"/>
<dbReference type="HOGENOM" id="CLU_113688_2_0_6"/>
<dbReference type="GO" id="GO:0005829">
    <property type="term" value="C:cytosol"/>
    <property type="evidence" value="ECO:0007669"/>
    <property type="project" value="TreeGrafter"/>
</dbReference>
<dbReference type="GO" id="GO:0003723">
    <property type="term" value="F:RNA binding"/>
    <property type="evidence" value="ECO:0007669"/>
    <property type="project" value="UniProtKB-UniRule"/>
</dbReference>
<dbReference type="GO" id="GO:0006355">
    <property type="term" value="P:regulation of DNA-templated transcription"/>
    <property type="evidence" value="ECO:0007669"/>
    <property type="project" value="InterPro"/>
</dbReference>
<dbReference type="GO" id="GO:0043487">
    <property type="term" value="P:regulation of RNA stability"/>
    <property type="evidence" value="ECO:0007669"/>
    <property type="project" value="TreeGrafter"/>
</dbReference>
<dbReference type="GO" id="GO:0045974">
    <property type="term" value="P:regulation of translation, ncRNA-mediated"/>
    <property type="evidence" value="ECO:0007669"/>
    <property type="project" value="TreeGrafter"/>
</dbReference>
<dbReference type="CDD" id="cd01716">
    <property type="entry name" value="Hfq"/>
    <property type="match status" value="1"/>
</dbReference>
<dbReference type="FunFam" id="2.30.30.100:FF:000001">
    <property type="entry name" value="RNA-binding protein Hfq"/>
    <property type="match status" value="1"/>
</dbReference>
<dbReference type="Gene3D" id="2.30.30.100">
    <property type="match status" value="1"/>
</dbReference>
<dbReference type="HAMAP" id="MF_00436">
    <property type="entry name" value="Hfq"/>
    <property type="match status" value="1"/>
</dbReference>
<dbReference type="InterPro" id="IPR005001">
    <property type="entry name" value="Hfq"/>
</dbReference>
<dbReference type="InterPro" id="IPR010920">
    <property type="entry name" value="LSM_dom_sf"/>
</dbReference>
<dbReference type="InterPro" id="IPR047575">
    <property type="entry name" value="Sm"/>
</dbReference>
<dbReference type="NCBIfam" id="TIGR02383">
    <property type="entry name" value="Hfq"/>
    <property type="match status" value="1"/>
</dbReference>
<dbReference type="NCBIfam" id="NF001602">
    <property type="entry name" value="PRK00395.1"/>
    <property type="match status" value="1"/>
</dbReference>
<dbReference type="PANTHER" id="PTHR34772">
    <property type="entry name" value="RNA-BINDING PROTEIN HFQ"/>
    <property type="match status" value="1"/>
</dbReference>
<dbReference type="PANTHER" id="PTHR34772:SF1">
    <property type="entry name" value="RNA-BINDING PROTEIN HFQ"/>
    <property type="match status" value="1"/>
</dbReference>
<dbReference type="Pfam" id="PF17209">
    <property type="entry name" value="Hfq"/>
    <property type="match status" value="1"/>
</dbReference>
<dbReference type="SUPFAM" id="SSF50182">
    <property type="entry name" value="Sm-like ribonucleoproteins"/>
    <property type="match status" value="1"/>
</dbReference>
<dbReference type="PROSITE" id="PS52002">
    <property type="entry name" value="SM"/>
    <property type="match status" value="1"/>
</dbReference>
<name>HFQ_XANOM</name>
<organism>
    <name type="scientific">Xanthomonas oryzae pv. oryzae (strain MAFF 311018)</name>
    <dbReference type="NCBI Taxonomy" id="342109"/>
    <lineage>
        <taxon>Bacteria</taxon>
        <taxon>Pseudomonadati</taxon>
        <taxon>Pseudomonadota</taxon>
        <taxon>Gammaproteobacteria</taxon>
        <taxon>Lysobacterales</taxon>
        <taxon>Lysobacteraceae</taxon>
        <taxon>Xanthomonas</taxon>
    </lineage>
</organism>
<accession>Q2P1M4</accession>